<proteinExistence type="inferred from homology"/>
<evidence type="ECO:0000255" key="1">
    <source>
        <dbReference type="HAMAP-Rule" id="MF_01006"/>
    </source>
</evidence>
<reference key="1">
    <citation type="journal article" date="2012" name="Environ. Microbiol.">
        <title>The genome sequence of Desulfatibacillum alkenivorans AK-01: a blueprint for anaerobic alkane oxidation.</title>
        <authorList>
            <person name="Callaghan A.V."/>
            <person name="Morris B.E."/>
            <person name="Pereira I.A."/>
            <person name="McInerney M.J."/>
            <person name="Austin R.N."/>
            <person name="Groves J.T."/>
            <person name="Kukor J.J."/>
            <person name="Suflita J.M."/>
            <person name="Young L.Y."/>
            <person name="Zylstra G.J."/>
            <person name="Wawrik B."/>
        </authorList>
    </citation>
    <scope>NUCLEOTIDE SEQUENCE [LARGE SCALE GENOMIC DNA]</scope>
    <source>
        <strain>AK-01</strain>
    </source>
</reference>
<accession>B8FAZ7</accession>
<keyword id="KW-0046">Antibiotic resistance</keyword>
<keyword id="KW-0997">Cell inner membrane</keyword>
<keyword id="KW-1003">Cell membrane</keyword>
<keyword id="KW-0133">Cell shape</keyword>
<keyword id="KW-0961">Cell wall biogenesis/degradation</keyword>
<keyword id="KW-0378">Hydrolase</keyword>
<keyword id="KW-0472">Membrane</keyword>
<keyword id="KW-0573">Peptidoglycan synthesis</keyword>
<keyword id="KW-1185">Reference proteome</keyword>
<keyword id="KW-0812">Transmembrane</keyword>
<keyword id="KW-1133">Transmembrane helix</keyword>
<dbReference type="EC" id="3.6.1.27" evidence="1"/>
<dbReference type="EMBL" id="CP001322">
    <property type="protein sequence ID" value="ACL04083.1"/>
    <property type="molecule type" value="Genomic_DNA"/>
</dbReference>
<dbReference type="RefSeq" id="WP_015947157.1">
    <property type="nucleotide sequence ID" value="NC_011768.1"/>
</dbReference>
<dbReference type="SMR" id="B8FAZ7"/>
<dbReference type="KEGG" id="dal:Dalk_2390"/>
<dbReference type="eggNOG" id="COG1968">
    <property type="taxonomic scope" value="Bacteria"/>
</dbReference>
<dbReference type="HOGENOM" id="CLU_060296_1_2_7"/>
<dbReference type="Proteomes" id="UP000000739">
    <property type="component" value="Chromosome"/>
</dbReference>
<dbReference type="GO" id="GO:0005886">
    <property type="term" value="C:plasma membrane"/>
    <property type="evidence" value="ECO:0007669"/>
    <property type="project" value="UniProtKB-SubCell"/>
</dbReference>
<dbReference type="GO" id="GO:0050380">
    <property type="term" value="F:undecaprenyl-diphosphatase activity"/>
    <property type="evidence" value="ECO:0007669"/>
    <property type="project" value="UniProtKB-UniRule"/>
</dbReference>
<dbReference type="GO" id="GO:0071555">
    <property type="term" value="P:cell wall organization"/>
    <property type="evidence" value="ECO:0007669"/>
    <property type="project" value="UniProtKB-KW"/>
</dbReference>
<dbReference type="GO" id="GO:0009252">
    <property type="term" value="P:peptidoglycan biosynthetic process"/>
    <property type="evidence" value="ECO:0007669"/>
    <property type="project" value="UniProtKB-KW"/>
</dbReference>
<dbReference type="GO" id="GO:0008360">
    <property type="term" value="P:regulation of cell shape"/>
    <property type="evidence" value="ECO:0007669"/>
    <property type="project" value="UniProtKB-KW"/>
</dbReference>
<dbReference type="GO" id="GO:0046677">
    <property type="term" value="P:response to antibiotic"/>
    <property type="evidence" value="ECO:0007669"/>
    <property type="project" value="UniProtKB-UniRule"/>
</dbReference>
<dbReference type="HAMAP" id="MF_01006">
    <property type="entry name" value="Undec_diphosphatase"/>
    <property type="match status" value="1"/>
</dbReference>
<dbReference type="InterPro" id="IPR003824">
    <property type="entry name" value="UppP"/>
</dbReference>
<dbReference type="PANTHER" id="PTHR30622">
    <property type="entry name" value="UNDECAPRENYL-DIPHOSPHATASE"/>
    <property type="match status" value="1"/>
</dbReference>
<dbReference type="PANTHER" id="PTHR30622:SF2">
    <property type="entry name" value="UNDECAPRENYL-DIPHOSPHATASE"/>
    <property type="match status" value="1"/>
</dbReference>
<dbReference type="Pfam" id="PF02673">
    <property type="entry name" value="BacA"/>
    <property type="match status" value="1"/>
</dbReference>
<gene>
    <name evidence="1" type="primary">uppP</name>
    <name type="ordered locus">Dalk_2390</name>
</gene>
<protein>
    <recommendedName>
        <fullName evidence="1">Undecaprenyl-diphosphatase</fullName>
        <ecNumber evidence="1">3.6.1.27</ecNumber>
    </recommendedName>
    <alternativeName>
        <fullName evidence="1">Bacitracin resistance protein</fullName>
    </alternativeName>
    <alternativeName>
        <fullName evidence="1">Undecaprenyl pyrophosphate phosphatase</fullName>
    </alternativeName>
</protein>
<name>UPPP_DESAL</name>
<organism>
    <name type="scientific">Desulfatibacillum aliphaticivorans</name>
    <dbReference type="NCBI Taxonomy" id="218208"/>
    <lineage>
        <taxon>Bacteria</taxon>
        <taxon>Pseudomonadati</taxon>
        <taxon>Thermodesulfobacteriota</taxon>
        <taxon>Desulfobacteria</taxon>
        <taxon>Desulfobacterales</taxon>
        <taxon>Desulfatibacillaceae</taxon>
        <taxon>Desulfatibacillum</taxon>
    </lineage>
</organism>
<comment type="function">
    <text evidence="1">Catalyzes the dephosphorylation of undecaprenyl diphosphate (UPP). Confers resistance to bacitracin.</text>
</comment>
<comment type="catalytic activity">
    <reaction evidence="1">
        <text>di-trans,octa-cis-undecaprenyl diphosphate + H2O = di-trans,octa-cis-undecaprenyl phosphate + phosphate + H(+)</text>
        <dbReference type="Rhea" id="RHEA:28094"/>
        <dbReference type="ChEBI" id="CHEBI:15377"/>
        <dbReference type="ChEBI" id="CHEBI:15378"/>
        <dbReference type="ChEBI" id="CHEBI:43474"/>
        <dbReference type="ChEBI" id="CHEBI:58405"/>
        <dbReference type="ChEBI" id="CHEBI:60392"/>
        <dbReference type="EC" id="3.6.1.27"/>
    </reaction>
</comment>
<comment type="subcellular location">
    <subcellularLocation>
        <location evidence="1">Cell inner membrane</location>
        <topology evidence="1">Multi-pass membrane protein</topology>
    </subcellularLocation>
</comment>
<comment type="miscellaneous">
    <text>Bacitracin is thought to be involved in the inhibition of peptidoglycan synthesis by sequestering undecaprenyl diphosphate, thereby reducing the pool of lipid carrier available.</text>
</comment>
<comment type="similarity">
    <text evidence="1">Belongs to the UppP family.</text>
</comment>
<feature type="chain" id="PRO_1000197360" description="Undecaprenyl-diphosphatase">
    <location>
        <begin position="1"/>
        <end position="276"/>
    </location>
</feature>
<feature type="transmembrane region" description="Helical" evidence="1">
    <location>
        <begin position="1"/>
        <end position="21"/>
    </location>
</feature>
<feature type="transmembrane region" description="Helical" evidence="1">
    <location>
        <begin position="41"/>
        <end position="61"/>
    </location>
</feature>
<feature type="transmembrane region" description="Helical" evidence="1">
    <location>
        <begin position="97"/>
        <end position="117"/>
    </location>
</feature>
<feature type="transmembrane region" description="Helical" evidence="1">
    <location>
        <begin position="121"/>
        <end position="141"/>
    </location>
</feature>
<feature type="transmembrane region" description="Helical" evidence="1">
    <location>
        <begin position="155"/>
        <end position="175"/>
    </location>
</feature>
<feature type="transmembrane region" description="Helical" evidence="1">
    <location>
        <begin position="200"/>
        <end position="220"/>
    </location>
</feature>
<feature type="transmembrane region" description="Helical" evidence="1">
    <location>
        <begin position="231"/>
        <end position="251"/>
    </location>
</feature>
<feature type="transmembrane region" description="Helical" evidence="1">
    <location>
        <begin position="256"/>
        <end position="276"/>
    </location>
</feature>
<sequence>MHWLEVVLLGVIQGLTEFLPVSSSGHLVLFQGLMGMEEPELLLDICLHVGTLAAVLWVFFAQILEAAKGFFRFCAAAPKGKAAMVQVWTTDQDARMALLIIIGTIPTGFIGMGFHKIADKLFASPVLAGAMLLITGALLWATRYVRTEGKLLPKVTWGNALTVGTIQGLAILPGISRSGSTICAALFLGVDREVAARYSFLLSIPAIVAALILEVADASAAAHPPVSMLLLGGIVSAFTGLAALKWLLAIVRKGSLWWFAPYCWLVGATVLVANFV</sequence>